<feature type="chain" id="PRO_0000073617" description="Parvalbumin beta">
    <location>
        <begin position="1"/>
        <end position="108"/>
    </location>
</feature>
<feature type="domain" description="EF-hand 1" evidence="2">
    <location>
        <begin position="38"/>
        <end position="73"/>
    </location>
</feature>
<feature type="domain" description="EF-hand 2" evidence="2">
    <location>
        <begin position="77"/>
        <end position="108"/>
    </location>
</feature>
<feature type="binding site" evidence="2">
    <location>
        <position position="51"/>
    </location>
    <ligand>
        <name>Ca(2+)</name>
        <dbReference type="ChEBI" id="CHEBI:29108"/>
        <label>1</label>
    </ligand>
</feature>
<feature type="binding site" evidence="2">
    <location>
        <position position="53"/>
    </location>
    <ligand>
        <name>Ca(2+)</name>
        <dbReference type="ChEBI" id="CHEBI:29108"/>
        <label>1</label>
    </ligand>
</feature>
<feature type="binding site" evidence="2">
    <location>
        <position position="55"/>
    </location>
    <ligand>
        <name>Ca(2+)</name>
        <dbReference type="ChEBI" id="CHEBI:29108"/>
        <label>1</label>
    </ligand>
</feature>
<feature type="binding site" evidence="1">
    <location>
        <position position="57"/>
    </location>
    <ligand>
        <name>Ca(2+)</name>
        <dbReference type="ChEBI" id="CHEBI:29108"/>
        <label>1</label>
    </ligand>
</feature>
<feature type="binding site" evidence="1">
    <location>
        <position position="59"/>
    </location>
    <ligand>
        <name>Ca(2+)</name>
        <dbReference type="ChEBI" id="CHEBI:29108"/>
        <label>1</label>
    </ligand>
</feature>
<feature type="binding site" evidence="2">
    <location>
        <position position="62"/>
    </location>
    <ligand>
        <name>Ca(2+)</name>
        <dbReference type="ChEBI" id="CHEBI:29108"/>
        <label>1</label>
    </ligand>
</feature>
<feature type="binding site" evidence="2">
    <location>
        <position position="90"/>
    </location>
    <ligand>
        <name>Ca(2+)</name>
        <dbReference type="ChEBI" id="CHEBI:29108"/>
        <label>2</label>
    </ligand>
</feature>
<feature type="binding site" evidence="2">
    <location>
        <position position="92"/>
    </location>
    <ligand>
        <name>Ca(2+)</name>
        <dbReference type="ChEBI" id="CHEBI:29108"/>
        <label>2</label>
    </ligand>
</feature>
<feature type="binding site" evidence="2">
    <location>
        <position position="94"/>
    </location>
    <ligand>
        <name>Ca(2+)</name>
        <dbReference type="ChEBI" id="CHEBI:29108"/>
        <label>2</label>
    </ligand>
</feature>
<feature type="binding site" evidence="2">
    <location>
        <position position="96"/>
    </location>
    <ligand>
        <name>Ca(2+)</name>
        <dbReference type="ChEBI" id="CHEBI:29108"/>
        <label>2</label>
    </ligand>
</feature>
<feature type="binding site" evidence="2">
    <location>
        <position position="101"/>
    </location>
    <ligand>
        <name>Ca(2+)</name>
        <dbReference type="ChEBI" id="CHEBI:29108"/>
        <label>2</label>
    </ligand>
</feature>
<feature type="modified residue" description="N-acetylserine" evidence="3">
    <location>
        <position position="1"/>
    </location>
</feature>
<comment type="function">
    <text>In muscle, parvalbumin is thought to be involved in relaxation after contraction. It binds two calcium ions.</text>
</comment>
<comment type="miscellaneous">
    <text>This parvalbumin has an isoelectric point of 4.5.</text>
</comment>
<comment type="similarity">
    <text evidence="4">Belongs to the parvalbumin family.</text>
</comment>
<protein>
    <recommendedName>
        <fullName>Parvalbumin beta</fullName>
    </recommendedName>
    <alternativeName>
        <fullName>Parvalbumin pI 4.50</fullName>
    </alternativeName>
</protein>
<evidence type="ECO:0000250" key="1">
    <source>
        <dbReference type="UniProtKB" id="P02621"/>
    </source>
</evidence>
<evidence type="ECO:0000255" key="2">
    <source>
        <dbReference type="PROSITE-ProRule" id="PRU00448"/>
    </source>
</evidence>
<evidence type="ECO:0000269" key="3">
    <source>
    </source>
</evidence>
<evidence type="ECO:0000305" key="4"/>
<sequence length="108" mass="11581">SITDIVSEKDIDAALESVKAAGSFNYKIFFQKVGLAGKSAADAKKVFEILDRDKSGFIEQDELGLFLQNFRASARVLSDAETSAFLKAGDSDGDGKIGVEEFQALVKA</sequence>
<accession>P02617</accession>
<keyword id="KW-0007">Acetylation</keyword>
<keyword id="KW-0106">Calcium</keyword>
<keyword id="KW-0903">Direct protein sequencing</keyword>
<keyword id="KW-0479">Metal-binding</keyword>
<keyword id="KW-0514">Muscle protein</keyword>
<keyword id="KW-0677">Repeat</keyword>
<dbReference type="PIR" id="A03052">
    <property type="entry name" value="PVFG"/>
</dbReference>
<dbReference type="SMR" id="P02617"/>
<dbReference type="Allergome" id="893">
    <property type="allergen name" value="Ran e 2"/>
</dbReference>
<dbReference type="iPTMnet" id="P02617"/>
<dbReference type="GO" id="GO:0005737">
    <property type="term" value="C:cytoplasm"/>
    <property type="evidence" value="ECO:0007669"/>
    <property type="project" value="TreeGrafter"/>
</dbReference>
<dbReference type="GO" id="GO:0005509">
    <property type="term" value="F:calcium ion binding"/>
    <property type="evidence" value="ECO:0007669"/>
    <property type="project" value="InterPro"/>
</dbReference>
<dbReference type="CDD" id="cd16255">
    <property type="entry name" value="EFh_parvalbumin_beta"/>
    <property type="match status" value="1"/>
</dbReference>
<dbReference type="FunFam" id="1.10.238.10:FF:000060">
    <property type="entry name" value="Parvalbumin, thymic"/>
    <property type="match status" value="1"/>
</dbReference>
<dbReference type="Gene3D" id="1.10.238.10">
    <property type="entry name" value="EF-hand"/>
    <property type="match status" value="1"/>
</dbReference>
<dbReference type="InterPro" id="IPR011992">
    <property type="entry name" value="EF-hand-dom_pair"/>
</dbReference>
<dbReference type="InterPro" id="IPR018247">
    <property type="entry name" value="EF_Hand_1_Ca_BS"/>
</dbReference>
<dbReference type="InterPro" id="IPR002048">
    <property type="entry name" value="EF_hand_dom"/>
</dbReference>
<dbReference type="InterPro" id="IPR008080">
    <property type="entry name" value="Parvalbumin"/>
</dbReference>
<dbReference type="PANTHER" id="PTHR11653">
    <property type="entry name" value="PARVALBUMIN ALPHA"/>
    <property type="match status" value="1"/>
</dbReference>
<dbReference type="PANTHER" id="PTHR11653:SF3">
    <property type="entry name" value="PARVALBUMIN, THYMIC"/>
    <property type="match status" value="1"/>
</dbReference>
<dbReference type="Pfam" id="PF13499">
    <property type="entry name" value="EF-hand_7"/>
    <property type="match status" value="1"/>
</dbReference>
<dbReference type="PRINTS" id="PR01697">
    <property type="entry name" value="PARVALBUMIN"/>
</dbReference>
<dbReference type="SMART" id="SM00054">
    <property type="entry name" value="EFh"/>
    <property type="match status" value="2"/>
</dbReference>
<dbReference type="SUPFAM" id="SSF47473">
    <property type="entry name" value="EF-hand"/>
    <property type="match status" value="1"/>
</dbReference>
<dbReference type="PROSITE" id="PS00018">
    <property type="entry name" value="EF_HAND_1"/>
    <property type="match status" value="2"/>
</dbReference>
<dbReference type="PROSITE" id="PS50222">
    <property type="entry name" value="EF_HAND_2"/>
    <property type="match status" value="2"/>
</dbReference>
<reference key="1">
    <citation type="journal article" date="1975" name="Eur. J. Biochem.">
        <title>The amino-acid sequence of the most acidic major parvalbumin from frog muscle.</title>
        <authorList>
            <person name="Capony J.-P."/>
            <person name="Demaille J.G."/>
            <person name="Pina C."/>
            <person name="Pechere J.-F."/>
        </authorList>
    </citation>
    <scope>PROTEIN SEQUENCE</scope>
    <scope>ACETYLATION AT SER-1</scope>
</reference>
<reference key="2">
    <citation type="journal article" date="1987" name="Biochemistry">
        <title>Heat capacity and entropy changes of the two major isotypes of bullfrog (Rana catesbeiana) parvalbumins induced by calcium binding.</title>
        <authorList>
            <person name="Tanokura M."/>
            <person name="Yamada K."/>
        </authorList>
    </citation>
    <scope>CALCIUM-BINDING</scope>
</reference>
<proteinExistence type="evidence at protein level"/>
<organism>
    <name type="scientific">Pelophylax lessonae</name>
    <name type="common">Pool frog</name>
    <name type="synonym">Rana lessonae</name>
    <dbReference type="NCBI Taxonomy" id="45623"/>
    <lineage>
        <taxon>Eukaryota</taxon>
        <taxon>Metazoa</taxon>
        <taxon>Chordata</taxon>
        <taxon>Craniata</taxon>
        <taxon>Vertebrata</taxon>
        <taxon>Euteleostomi</taxon>
        <taxon>Amphibia</taxon>
        <taxon>Batrachia</taxon>
        <taxon>Anura</taxon>
        <taxon>Neobatrachia</taxon>
        <taxon>Ranoidea</taxon>
        <taxon>Ranidae</taxon>
        <taxon>Pelophylax</taxon>
    </lineage>
</organism>
<name>PRVB_PELLE</name>